<name>RUVC_RHILW</name>
<feature type="chain" id="PRO_1000090553" description="Crossover junction endodeoxyribonuclease RuvC">
    <location>
        <begin position="1"/>
        <end position="169"/>
    </location>
</feature>
<feature type="active site" evidence="1">
    <location>
        <position position="11"/>
    </location>
</feature>
<feature type="active site" evidence="1">
    <location>
        <position position="71"/>
    </location>
</feature>
<feature type="active site" evidence="1">
    <location>
        <position position="143"/>
    </location>
</feature>
<feature type="binding site" evidence="1">
    <location>
        <position position="11"/>
    </location>
    <ligand>
        <name>Mg(2+)</name>
        <dbReference type="ChEBI" id="CHEBI:18420"/>
        <label>1</label>
    </ligand>
</feature>
<feature type="binding site" evidence="1">
    <location>
        <position position="71"/>
    </location>
    <ligand>
        <name>Mg(2+)</name>
        <dbReference type="ChEBI" id="CHEBI:18420"/>
        <label>2</label>
    </ligand>
</feature>
<feature type="binding site" evidence="1">
    <location>
        <position position="143"/>
    </location>
    <ligand>
        <name>Mg(2+)</name>
        <dbReference type="ChEBI" id="CHEBI:18420"/>
        <label>1</label>
    </ligand>
</feature>
<comment type="function">
    <text evidence="1">The RuvA-RuvB-RuvC complex processes Holliday junction (HJ) DNA during genetic recombination and DNA repair. Endonuclease that resolves HJ intermediates. Cleaves cruciform DNA by making single-stranded nicks across the HJ at symmetrical positions within the homologous arms, yielding a 5'-phosphate and a 3'-hydroxyl group; requires a central core of homology in the junction. The consensus cleavage sequence is 5'-(A/T)TT(C/G)-3'. Cleavage occurs on the 3'-side of the TT dinucleotide at the point of strand exchange. HJ branch migration catalyzed by RuvA-RuvB allows RuvC to scan DNA until it finds its consensus sequence, where it cleaves and resolves the cruciform DNA.</text>
</comment>
<comment type="catalytic activity">
    <reaction evidence="1">
        <text>Endonucleolytic cleavage at a junction such as a reciprocal single-stranded crossover between two homologous DNA duplexes (Holliday junction).</text>
        <dbReference type="EC" id="3.1.21.10"/>
    </reaction>
</comment>
<comment type="cofactor">
    <cofactor evidence="1">
        <name>Mg(2+)</name>
        <dbReference type="ChEBI" id="CHEBI:18420"/>
    </cofactor>
    <text evidence="1">Binds 2 Mg(2+) ion per subunit.</text>
</comment>
<comment type="subunit">
    <text evidence="1">Homodimer which binds Holliday junction (HJ) DNA. The HJ becomes 2-fold symmetrical on binding to RuvC with unstacked arms; it has a different conformation from HJ DNA in complex with RuvA. In the full resolvosome a probable DNA-RuvA(4)-RuvB(12)-RuvC(2) complex forms which resolves the HJ.</text>
</comment>
<comment type="subcellular location">
    <subcellularLocation>
        <location evidence="1">Cytoplasm</location>
    </subcellularLocation>
</comment>
<comment type="similarity">
    <text evidence="1">Belongs to the RuvC family.</text>
</comment>
<accession>B5ZP76</accession>
<dbReference type="EC" id="3.1.21.10" evidence="1"/>
<dbReference type="EMBL" id="CP001191">
    <property type="protein sequence ID" value="ACI56484.1"/>
    <property type="molecule type" value="Genomic_DNA"/>
</dbReference>
<dbReference type="RefSeq" id="WP_003590322.1">
    <property type="nucleotide sequence ID" value="NC_011369.1"/>
</dbReference>
<dbReference type="SMR" id="B5ZP76"/>
<dbReference type="STRING" id="395492.Rleg2_3217"/>
<dbReference type="KEGG" id="rlt:Rleg2_3217"/>
<dbReference type="eggNOG" id="COG0817">
    <property type="taxonomic scope" value="Bacteria"/>
</dbReference>
<dbReference type="HOGENOM" id="CLU_091257_1_0_5"/>
<dbReference type="Proteomes" id="UP000008330">
    <property type="component" value="Chromosome"/>
</dbReference>
<dbReference type="GO" id="GO:0005737">
    <property type="term" value="C:cytoplasm"/>
    <property type="evidence" value="ECO:0007669"/>
    <property type="project" value="UniProtKB-SubCell"/>
</dbReference>
<dbReference type="GO" id="GO:0048476">
    <property type="term" value="C:Holliday junction resolvase complex"/>
    <property type="evidence" value="ECO:0007669"/>
    <property type="project" value="UniProtKB-UniRule"/>
</dbReference>
<dbReference type="GO" id="GO:0008821">
    <property type="term" value="F:crossover junction DNA endonuclease activity"/>
    <property type="evidence" value="ECO:0007669"/>
    <property type="project" value="UniProtKB-UniRule"/>
</dbReference>
<dbReference type="GO" id="GO:0003677">
    <property type="term" value="F:DNA binding"/>
    <property type="evidence" value="ECO:0007669"/>
    <property type="project" value="UniProtKB-KW"/>
</dbReference>
<dbReference type="GO" id="GO:0000287">
    <property type="term" value="F:magnesium ion binding"/>
    <property type="evidence" value="ECO:0007669"/>
    <property type="project" value="UniProtKB-UniRule"/>
</dbReference>
<dbReference type="GO" id="GO:0006310">
    <property type="term" value="P:DNA recombination"/>
    <property type="evidence" value="ECO:0007669"/>
    <property type="project" value="UniProtKB-UniRule"/>
</dbReference>
<dbReference type="GO" id="GO:0006281">
    <property type="term" value="P:DNA repair"/>
    <property type="evidence" value="ECO:0007669"/>
    <property type="project" value="UniProtKB-UniRule"/>
</dbReference>
<dbReference type="CDD" id="cd16962">
    <property type="entry name" value="RuvC"/>
    <property type="match status" value="1"/>
</dbReference>
<dbReference type="FunFam" id="3.30.420.10:FF:000002">
    <property type="entry name" value="Crossover junction endodeoxyribonuclease RuvC"/>
    <property type="match status" value="1"/>
</dbReference>
<dbReference type="Gene3D" id="3.30.420.10">
    <property type="entry name" value="Ribonuclease H-like superfamily/Ribonuclease H"/>
    <property type="match status" value="1"/>
</dbReference>
<dbReference type="HAMAP" id="MF_00034">
    <property type="entry name" value="RuvC"/>
    <property type="match status" value="1"/>
</dbReference>
<dbReference type="InterPro" id="IPR012337">
    <property type="entry name" value="RNaseH-like_sf"/>
</dbReference>
<dbReference type="InterPro" id="IPR036397">
    <property type="entry name" value="RNaseH_sf"/>
</dbReference>
<dbReference type="InterPro" id="IPR020563">
    <property type="entry name" value="X-over_junc_endoDNase_Mg_BS"/>
</dbReference>
<dbReference type="InterPro" id="IPR002176">
    <property type="entry name" value="X-over_junc_endoDNase_RuvC"/>
</dbReference>
<dbReference type="NCBIfam" id="TIGR00228">
    <property type="entry name" value="ruvC"/>
    <property type="match status" value="1"/>
</dbReference>
<dbReference type="PANTHER" id="PTHR30194">
    <property type="entry name" value="CROSSOVER JUNCTION ENDODEOXYRIBONUCLEASE RUVC"/>
    <property type="match status" value="1"/>
</dbReference>
<dbReference type="PANTHER" id="PTHR30194:SF3">
    <property type="entry name" value="CROSSOVER JUNCTION ENDODEOXYRIBONUCLEASE RUVC"/>
    <property type="match status" value="1"/>
</dbReference>
<dbReference type="Pfam" id="PF02075">
    <property type="entry name" value="RuvC"/>
    <property type="match status" value="1"/>
</dbReference>
<dbReference type="PRINTS" id="PR00696">
    <property type="entry name" value="RSOLVASERUVC"/>
</dbReference>
<dbReference type="SUPFAM" id="SSF53098">
    <property type="entry name" value="Ribonuclease H-like"/>
    <property type="match status" value="1"/>
</dbReference>
<dbReference type="PROSITE" id="PS01321">
    <property type="entry name" value="RUVC"/>
    <property type="match status" value="1"/>
</dbReference>
<protein>
    <recommendedName>
        <fullName evidence="1">Crossover junction endodeoxyribonuclease RuvC</fullName>
        <ecNumber evidence="1">3.1.21.10</ecNumber>
    </recommendedName>
    <alternativeName>
        <fullName evidence="1">Holliday junction nuclease RuvC</fullName>
    </alternativeName>
    <alternativeName>
        <fullName evidence="1">Holliday junction resolvase RuvC</fullName>
    </alternativeName>
</protein>
<gene>
    <name evidence="1" type="primary">ruvC</name>
    <name type="ordered locus">Rleg2_3217</name>
</gene>
<keyword id="KW-0963">Cytoplasm</keyword>
<keyword id="KW-0227">DNA damage</keyword>
<keyword id="KW-0233">DNA recombination</keyword>
<keyword id="KW-0234">DNA repair</keyword>
<keyword id="KW-0238">DNA-binding</keyword>
<keyword id="KW-0255">Endonuclease</keyword>
<keyword id="KW-0378">Hydrolase</keyword>
<keyword id="KW-0460">Magnesium</keyword>
<keyword id="KW-0479">Metal-binding</keyword>
<keyword id="KW-0540">Nuclease</keyword>
<keyword id="KW-1185">Reference proteome</keyword>
<sequence>MQNTIRIVGIDPGLRRTGWGIIDTLGNSLRFVASGTVTSDGDMDLASRLCQLHDGLAEVVHTYKPDEAAVEQTFVNKDAVATLKLGQARGIAMLVPARAGLRVSEYAPNAVKKAVIGVGHGEKHQIHMMLKILMPKVEFKGDDAADALAIAICHAHNRGSNRMREALAG</sequence>
<reference key="1">
    <citation type="journal article" date="2010" name="Stand. Genomic Sci.">
        <title>Complete genome sequence of Rhizobium leguminosarum bv trifolii strain WSM2304, an effective microsymbiont of the South American clover Trifolium polymorphum.</title>
        <authorList>
            <person name="Reeve W."/>
            <person name="O'Hara G."/>
            <person name="Chain P."/>
            <person name="Ardley J."/>
            <person name="Brau L."/>
            <person name="Nandesena K."/>
            <person name="Tiwari R."/>
            <person name="Malfatti S."/>
            <person name="Kiss H."/>
            <person name="Lapidus A."/>
            <person name="Copeland A."/>
            <person name="Nolan M."/>
            <person name="Land M."/>
            <person name="Ivanova N."/>
            <person name="Mavromatis K."/>
            <person name="Markowitz V."/>
            <person name="Kyrpides N."/>
            <person name="Melino V."/>
            <person name="Denton M."/>
            <person name="Yates R."/>
            <person name="Howieson J."/>
        </authorList>
    </citation>
    <scope>NUCLEOTIDE SEQUENCE [LARGE SCALE GENOMIC DNA]</scope>
    <source>
        <strain>WSM2304</strain>
    </source>
</reference>
<evidence type="ECO:0000255" key="1">
    <source>
        <dbReference type="HAMAP-Rule" id="MF_00034"/>
    </source>
</evidence>
<proteinExistence type="inferred from homology"/>
<organism>
    <name type="scientific">Rhizobium leguminosarum bv. trifolii (strain WSM2304)</name>
    <dbReference type="NCBI Taxonomy" id="395492"/>
    <lineage>
        <taxon>Bacteria</taxon>
        <taxon>Pseudomonadati</taxon>
        <taxon>Pseudomonadota</taxon>
        <taxon>Alphaproteobacteria</taxon>
        <taxon>Hyphomicrobiales</taxon>
        <taxon>Rhizobiaceae</taxon>
        <taxon>Rhizobium/Agrobacterium group</taxon>
        <taxon>Rhizobium</taxon>
    </lineage>
</organism>